<sequence>MNNHHQQLNPQFDPTSHDDFLEQMLSTLPSFWDPNSDLSAETTPDNVAAFPFDEHSTLNSKFRNHQITSPTTKAAAALMLQQHLLQMPANDVVDPTNFFKSPNPGGEASASVQALYNGFTGSLNGTQPQQHFQHPPQGNSNQIQGQNFGATNQAPPASGSAGGGGNQGQAKPRVRARRGQATDPHSIAERLRRERIAERMKALQELVPNANKTDKASMLDEIIDYVKFLQLQVKVLSMSRLGGAAAVAPLVADISSEGGGGGGGGDCVTNGAGGVLPRSTTTAASTTNDSLTMTEHQVAKLMEEDMGSAMQYLQGKGLCLMPISLATAISTATCHTRSPLIPNNLANLAAAAASNGEGPSSPNMSVLTVQSAVAGNDSTVKDVSKP</sequence>
<name>RHL1_LOTJA</name>
<reference key="1">
    <citation type="journal article" date="2009" name="Plant Physiol.">
        <title>Conservation of lotus and Arabidopsis basic helix-loop-helix proteins reveals new players in root hair development.</title>
        <authorList>
            <person name="Karas B."/>
            <person name="Amyot L."/>
            <person name="Johansen C."/>
            <person name="Sato S."/>
            <person name="Tabata S."/>
            <person name="Kawaguchi M."/>
            <person name="Szczyglowski K."/>
        </authorList>
    </citation>
    <scope>NUCLEOTIDE SEQUENCE [GENOMIC DNA]</scope>
    <scope>FUNCTION</scope>
    <scope>SUBCELLULAR LOCATION</scope>
    <scope>TISSUE SPECIFICITY</scope>
    <scope>DISRUPTION PHENOTYPE</scope>
</reference>
<evidence type="ECO:0000255" key="1">
    <source>
        <dbReference type="PROSITE-ProRule" id="PRU00981"/>
    </source>
</evidence>
<evidence type="ECO:0000256" key="2">
    <source>
        <dbReference type="SAM" id="MobiDB-lite"/>
    </source>
</evidence>
<evidence type="ECO:0000269" key="3">
    <source>
    </source>
</evidence>
<evidence type="ECO:0000303" key="4">
    <source>
    </source>
</evidence>
<evidence type="ECO:0000305" key="5"/>
<protein>
    <recommendedName>
        <fullName evidence="4">bHLH transcription factor RHL1</fullName>
    </recommendedName>
    <alternativeName>
        <fullName evidence="5">Basic helix-loop-helix protein RHL1</fullName>
    </alternativeName>
    <alternativeName>
        <fullName evidence="4">Protein ROOT HAIRLESS 1</fullName>
        <shortName evidence="4">LjRHL1</shortName>
    </alternativeName>
</protein>
<feature type="chain" id="PRO_0000450107" description="bHLH transcription factor RHL1">
    <location>
        <begin position="1"/>
        <end position="386"/>
    </location>
</feature>
<feature type="domain" description="bHLH" evidence="1">
    <location>
        <begin position="180"/>
        <end position="229"/>
    </location>
</feature>
<feature type="region of interest" description="Disordered" evidence="2">
    <location>
        <begin position="119"/>
        <end position="186"/>
    </location>
</feature>
<feature type="region of interest" description="Basic motif; degenerate" evidence="1">
    <location>
        <begin position="180"/>
        <end position="193"/>
    </location>
</feature>
<feature type="region of interest" description="Helix-loop-helix motif" evidence="1">
    <location>
        <begin position="194"/>
        <end position="229"/>
    </location>
</feature>
<feature type="compositionally biased region" description="Low complexity" evidence="2">
    <location>
        <begin position="127"/>
        <end position="137"/>
    </location>
</feature>
<feature type="compositionally biased region" description="Polar residues" evidence="2">
    <location>
        <begin position="138"/>
        <end position="151"/>
    </location>
</feature>
<comment type="function">
    <text evidence="3">Transcription factor that regulates the development of root hairs.</text>
</comment>
<comment type="subcellular location">
    <subcellularLocation>
        <location evidence="1 3">Nucleus</location>
    </subcellularLocation>
</comment>
<comment type="tissue specificity">
    <text evidence="4">Expressed in root epidermal cells.</text>
</comment>
<comment type="disruption phenotype">
    <text evidence="3">Root-hairless phenotype.</text>
</comment>
<accession>D0PX88</accession>
<dbReference type="EMBL" id="FJ375304">
    <property type="protein sequence ID" value="ACP28172.1"/>
    <property type="molecule type" value="Genomic_DNA"/>
</dbReference>
<dbReference type="SMR" id="D0PX88"/>
<dbReference type="GO" id="GO:0005634">
    <property type="term" value="C:nucleus"/>
    <property type="evidence" value="ECO:0007669"/>
    <property type="project" value="UniProtKB-SubCell"/>
</dbReference>
<dbReference type="GO" id="GO:0000981">
    <property type="term" value="F:DNA-binding transcription factor activity, RNA polymerase II-specific"/>
    <property type="evidence" value="ECO:0007669"/>
    <property type="project" value="TreeGrafter"/>
</dbReference>
<dbReference type="GO" id="GO:0046983">
    <property type="term" value="F:protein dimerization activity"/>
    <property type="evidence" value="ECO:0007669"/>
    <property type="project" value="InterPro"/>
</dbReference>
<dbReference type="GO" id="GO:0000978">
    <property type="term" value="F:RNA polymerase II cis-regulatory region sequence-specific DNA binding"/>
    <property type="evidence" value="ECO:0007669"/>
    <property type="project" value="TreeGrafter"/>
</dbReference>
<dbReference type="FunFam" id="4.10.280.10:FF:000017">
    <property type="entry name" value="Transcription factor bHLH66"/>
    <property type="match status" value="1"/>
</dbReference>
<dbReference type="Gene3D" id="4.10.280.10">
    <property type="entry name" value="Helix-loop-helix DNA-binding domain"/>
    <property type="match status" value="1"/>
</dbReference>
<dbReference type="InterPro" id="IPR011598">
    <property type="entry name" value="bHLH_dom"/>
</dbReference>
<dbReference type="InterPro" id="IPR036638">
    <property type="entry name" value="HLH_DNA-bd_sf"/>
</dbReference>
<dbReference type="InterPro" id="IPR045843">
    <property type="entry name" value="IND-like"/>
</dbReference>
<dbReference type="PANTHER" id="PTHR16223:SF268">
    <property type="entry name" value="SPERMATOGENESIS- AND OOGENESIS-SPECIFIC BASIC HELIX-LOOP-HELIX-CONTAINING PROTEIN 2"/>
    <property type="match status" value="1"/>
</dbReference>
<dbReference type="PANTHER" id="PTHR16223">
    <property type="entry name" value="TRANSCRIPTION FACTOR BHLH83-RELATED"/>
    <property type="match status" value="1"/>
</dbReference>
<dbReference type="Pfam" id="PF00010">
    <property type="entry name" value="HLH"/>
    <property type="match status" value="1"/>
</dbReference>
<dbReference type="SMART" id="SM00353">
    <property type="entry name" value="HLH"/>
    <property type="match status" value="1"/>
</dbReference>
<dbReference type="SUPFAM" id="SSF47459">
    <property type="entry name" value="HLH, helix-loop-helix DNA-binding domain"/>
    <property type="match status" value="1"/>
</dbReference>
<dbReference type="PROSITE" id="PS50888">
    <property type="entry name" value="BHLH"/>
    <property type="match status" value="1"/>
</dbReference>
<keyword id="KW-0238">DNA-binding</keyword>
<keyword id="KW-0539">Nucleus</keyword>
<keyword id="KW-0804">Transcription</keyword>
<keyword id="KW-0805">Transcription regulation</keyword>
<proteinExistence type="evidence at transcript level"/>
<gene>
    <name evidence="4" type="primary">RHL1</name>
</gene>
<organism>
    <name type="scientific">Lotus japonicus</name>
    <name type="common">Lotus corniculatus var. japonicus</name>
    <dbReference type="NCBI Taxonomy" id="34305"/>
    <lineage>
        <taxon>Eukaryota</taxon>
        <taxon>Viridiplantae</taxon>
        <taxon>Streptophyta</taxon>
        <taxon>Embryophyta</taxon>
        <taxon>Tracheophyta</taxon>
        <taxon>Spermatophyta</taxon>
        <taxon>Magnoliopsida</taxon>
        <taxon>eudicotyledons</taxon>
        <taxon>Gunneridae</taxon>
        <taxon>Pentapetalae</taxon>
        <taxon>rosids</taxon>
        <taxon>fabids</taxon>
        <taxon>Fabales</taxon>
        <taxon>Fabaceae</taxon>
        <taxon>Papilionoideae</taxon>
        <taxon>50 kb inversion clade</taxon>
        <taxon>NPAAA clade</taxon>
        <taxon>Hologalegina</taxon>
        <taxon>robinioid clade</taxon>
        <taxon>Loteae</taxon>
        <taxon>Lotus</taxon>
    </lineage>
</organism>